<gene>
    <name type="primary">HSFA6A</name>
    <name type="synonym">HSF17</name>
    <name type="ordered locus">Os06g0565200</name>
    <name type="ordered locus">LOC_Os06g36930</name>
    <name type="ORF">OsJ_020873</name>
    <name type="ORF">P0513E02.12</name>
</gene>
<comment type="function">
    <text evidence="1">Transcriptional regulator that specifically binds DNA of heat shock promoter elements (HSE).</text>
</comment>
<comment type="subunit">
    <text evidence="1">Homotrimer.</text>
</comment>
<comment type="subcellular location">
    <subcellularLocation>
        <location evidence="5">Cytoplasm</location>
    </subcellularLocation>
    <subcellularLocation>
        <location evidence="5">Nucleus</location>
    </subcellularLocation>
</comment>
<comment type="domain">
    <text evidence="4">The hydrophobic-rich region (HR-A/B) corresponds to the oligomerization domain. AHA motifs are transcriptional activator elements.</text>
</comment>
<comment type="PTM">
    <text evidence="1">Exhibits temperature-dependent phosphorylation.</text>
</comment>
<comment type="similarity">
    <text evidence="5">Belongs to the HSF family. Class A subfamily.</text>
</comment>
<evidence type="ECO:0000250" key="1"/>
<evidence type="ECO:0000255" key="2"/>
<evidence type="ECO:0000256" key="3">
    <source>
        <dbReference type="SAM" id="MobiDB-lite"/>
    </source>
</evidence>
<evidence type="ECO:0000269" key="4">
    <source>
    </source>
</evidence>
<evidence type="ECO:0000305" key="5"/>
<sequence length="331" mass="36103">MDYSTVKQEEVEVVVLDGEEEAAAAAAPVPLPAAMGVGAAVAPFLVKTFEMVEDPATDAVVSWGGAARNSFVVWDPHAFAAGLLPLHFKHANFSSFLRQLNTYGFRKVSADRWEFANEDFLGGQRHLLANIRRRRRGAGTGSTTPRAVNCGGGGGEGEVERLRRDKEALARELARLRRQQQEARAQLLDMERRVRGTERRQEQCTEFLARALRSPDVLDNIARRHAAAVERKKRRMLAAAADDDGLTFEALALAAAADTSHSTGGAVTTDMIWYELLGEEQAEIDIEVDQLVASASAAADTASEAEPWEEMGEEEVQELVQQIDCLASPSS</sequence>
<feature type="chain" id="PRO_0000350830" description="Putative heat stress transcription factor A-6a">
    <location>
        <begin position="1"/>
        <end position="331"/>
    </location>
</feature>
<feature type="region of interest" description="Disordered" evidence="3">
    <location>
        <begin position="135"/>
        <end position="160"/>
    </location>
</feature>
<feature type="region of interest" description="Hydrophobic repeat HR-A/B">
    <location>
        <begin position="162"/>
        <end position="212"/>
    </location>
</feature>
<feature type="coiled-coil region" evidence="2">
    <location>
        <begin position="156"/>
        <end position="238"/>
    </location>
</feature>
<feature type="short sequence motif" description="Nuclear localization signal" evidence="2">
    <location>
        <begin position="230"/>
        <end position="235"/>
    </location>
</feature>
<feature type="short sequence motif" description="Nuclear export signal" evidence="2">
    <location>
        <begin position="246"/>
        <end position="253"/>
    </location>
</feature>
<feature type="short sequence motif" description="AHA1">
    <location>
        <begin position="270"/>
        <end position="279"/>
    </location>
</feature>
<feature type="short sequence motif" description="AHA2">
    <location>
        <begin position="305"/>
        <end position="313"/>
    </location>
</feature>
<reference key="1">
    <citation type="journal article" date="2005" name="Nature">
        <title>The map-based sequence of the rice genome.</title>
        <authorList>
            <consortium name="International rice genome sequencing project (IRGSP)"/>
        </authorList>
    </citation>
    <scope>NUCLEOTIDE SEQUENCE [LARGE SCALE GENOMIC DNA]</scope>
    <source>
        <strain>cv. Nipponbare</strain>
    </source>
</reference>
<reference key="2">
    <citation type="journal article" date="2008" name="Nucleic Acids Res.">
        <title>The rice annotation project database (RAP-DB): 2008 update.</title>
        <authorList>
            <consortium name="The rice annotation project (RAP)"/>
        </authorList>
    </citation>
    <scope>GENOME REANNOTATION</scope>
    <source>
        <strain>cv. Nipponbare</strain>
    </source>
</reference>
<reference key="3">
    <citation type="journal article" date="2013" name="Rice">
        <title>Improvement of the Oryza sativa Nipponbare reference genome using next generation sequence and optical map data.</title>
        <authorList>
            <person name="Kawahara Y."/>
            <person name="de la Bastide M."/>
            <person name="Hamilton J.P."/>
            <person name="Kanamori H."/>
            <person name="McCombie W.R."/>
            <person name="Ouyang S."/>
            <person name="Schwartz D.C."/>
            <person name="Tanaka T."/>
            <person name="Wu J."/>
            <person name="Zhou S."/>
            <person name="Childs K.L."/>
            <person name="Davidson R.M."/>
            <person name="Lin H."/>
            <person name="Quesada-Ocampo L."/>
            <person name="Vaillancourt B."/>
            <person name="Sakai H."/>
            <person name="Lee S.S."/>
            <person name="Kim J."/>
            <person name="Numa H."/>
            <person name="Itoh T."/>
            <person name="Buell C.R."/>
            <person name="Matsumoto T."/>
        </authorList>
    </citation>
    <scope>GENOME REANNOTATION</scope>
    <source>
        <strain>cv. Nipponbare</strain>
    </source>
</reference>
<reference key="4">
    <citation type="journal article" date="2005" name="PLoS Biol.">
        <title>The genomes of Oryza sativa: a history of duplications.</title>
        <authorList>
            <person name="Yu J."/>
            <person name="Wang J."/>
            <person name="Lin W."/>
            <person name="Li S."/>
            <person name="Li H."/>
            <person name="Zhou J."/>
            <person name="Ni P."/>
            <person name="Dong W."/>
            <person name="Hu S."/>
            <person name="Zeng C."/>
            <person name="Zhang J."/>
            <person name="Zhang Y."/>
            <person name="Li R."/>
            <person name="Xu Z."/>
            <person name="Li S."/>
            <person name="Li X."/>
            <person name="Zheng H."/>
            <person name="Cong L."/>
            <person name="Lin L."/>
            <person name="Yin J."/>
            <person name="Geng J."/>
            <person name="Li G."/>
            <person name="Shi J."/>
            <person name="Liu J."/>
            <person name="Lv H."/>
            <person name="Li J."/>
            <person name="Wang J."/>
            <person name="Deng Y."/>
            <person name="Ran L."/>
            <person name="Shi X."/>
            <person name="Wang X."/>
            <person name="Wu Q."/>
            <person name="Li C."/>
            <person name="Ren X."/>
            <person name="Wang J."/>
            <person name="Wang X."/>
            <person name="Li D."/>
            <person name="Liu D."/>
            <person name="Zhang X."/>
            <person name="Ji Z."/>
            <person name="Zhao W."/>
            <person name="Sun Y."/>
            <person name="Zhang Z."/>
            <person name="Bao J."/>
            <person name="Han Y."/>
            <person name="Dong L."/>
            <person name="Ji J."/>
            <person name="Chen P."/>
            <person name="Wu S."/>
            <person name="Liu J."/>
            <person name="Xiao Y."/>
            <person name="Bu D."/>
            <person name="Tan J."/>
            <person name="Yang L."/>
            <person name="Ye C."/>
            <person name="Zhang J."/>
            <person name="Xu J."/>
            <person name="Zhou Y."/>
            <person name="Yu Y."/>
            <person name="Zhang B."/>
            <person name="Zhuang S."/>
            <person name="Wei H."/>
            <person name="Liu B."/>
            <person name="Lei M."/>
            <person name="Yu H."/>
            <person name="Li Y."/>
            <person name="Xu H."/>
            <person name="Wei S."/>
            <person name="He X."/>
            <person name="Fang L."/>
            <person name="Zhang Z."/>
            <person name="Zhang Y."/>
            <person name="Huang X."/>
            <person name="Su Z."/>
            <person name="Tong W."/>
            <person name="Li J."/>
            <person name="Tong Z."/>
            <person name="Li S."/>
            <person name="Ye J."/>
            <person name="Wang L."/>
            <person name="Fang L."/>
            <person name="Lei T."/>
            <person name="Chen C.-S."/>
            <person name="Chen H.-C."/>
            <person name="Xu Z."/>
            <person name="Li H."/>
            <person name="Huang H."/>
            <person name="Zhang F."/>
            <person name="Xu H."/>
            <person name="Li N."/>
            <person name="Zhao C."/>
            <person name="Li S."/>
            <person name="Dong L."/>
            <person name="Huang Y."/>
            <person name="Li L."/>
            <person name="Xi Y."/>
            <person name="Qi Q."/>
            <person name="Li W."/>
            <person name="Zhang B."/>
            <person name="Hu W."/>
            <person name="Zhang Y."/>
            <person name="Tian X."/>
            <person name="Jiao Y."/>
            <person name="Liang X."/>
            <person name="Jin J."/>
            <person name="Gao L."/>
            <person name="Zheng W."/>
            <person name="Hao B."/>
            <person name="Liu S.-M."/>
            <person name="Wang W."/>
            <person name="Yuan L."/>
            <person name="Cao M."/>
            <person name="McDermott J."/>
            <person name="Samudrala R."/>
            <person name="Wang J."/>
            <person name="Wong G.K.-S."/>
            <person name="Yang H."/>
        </authorList>
    </citation>
    <scope>NUCLEOTIDE SEQUENCE [LARGE SCALE GENOMIC DNA]</scope>
    <source>
        <strain>cv. Nipponbare</strain>
    </source>
</reference>
<reference key="5">
    <citation type="journal article" date="2004" name="J. Biosci.">
        <title>Heat stress response in plants: a complex game with chaperones and more than twenty heat stress transcription factors.</title>
        <authorList>
            <person name="Baniwal S.K."/>
            <person name="Bharti K."/>
            <person name="Chan K.Y."/>
            <person name="Fauth M."/>
            <person name="Ganguli A."/>
            <person name="Kotak S."/>
            <person name="Mishra S.K."/>
            <person name="Nover L."/>
            <person name="Port M."/>
            <person name="Scharf K.-D."/>
            <person name="Tripp J."/>
            <person name="Weber C."/>
            <person name="Zielinski D."/>
            <person name="von Koskull-Doering P."/>
        </authorList>
    </citation>
    <scope>GENE FAMILY</scope>
    <scope>NOMENCLATURE</scope>
</reference>
<reference key="6">
    <citation type="journal article" date="2008" name="J. Genet. Genomics">
        <title>Genome-wide analysis of heat shock transcription factor families in rice and Arabidopsis.</title>
        <authorList>
            <person name="Guo J."/>
            <person name="Wu J."/>
            <person name="Ji Q."/>
            <person name="Wang C."/>
            <person name="Luo L."/>
            <person name="Yuan Y."/>
            <person name="Wang Y."/>
            <person name="Wang J."/>
        </authorList>
    </citation>
    <scope>GENE FAMILY</scope>
    <scope>NOMENCLATURE</scope>
    <scope>DOMAIN AHA</scope>
</reference>
<protein>
    <recommendedName>
        <fullName>Putative heat stress transcription factor A-6a</fullName>
    </recommendedName>
    <alternativeName>
        <fullName>Heat stress transcription factor 17</fullName>
        <shortName>OsHsf-17</shortName>
    </alternativeName>
</protein>
<organism>
    <name type="scientific">Oryza sativa subsp. japonica</name>
    <name type="common">Rice</name>
    <dbReference type="NCBI Taxonomy" id="39947"/>
    <lineage>
        <taxon>Eukaryota</taxon>
        <taxon>Viridiplantae</taxon>
        <taxon>Streptophyta</taxon>
        <taxon>Embryophyta</taxon>
        <taxon>Tracheophyta</taxon>
        <taxon>Spermatophyta</taxon>
        <taxon>Magnoliopsida</taxon>
        <taxon>Liliopsida</taxon>
        <taxon>Poales</taxon>
        <taxon>Poaceae</taxon>
        <taxon>BOP clade</taxon>
        <taxon>Oryzoideae</taxon>
        <taxon>Oryzeae</taxon>
        <taxon>Oryzinae</taxon>
        <taxon>Oryza</taxon>
        <taxon>Oryza sativa</taxon>
    </lineage>
</organism>
<proteinExistence type="inferred from homology"/>
<name>HFA6A_ORYSJ</name>
<accession>Q5Z6A4</accession>
<accession>A0A0P0WY57</accession>
<dbReference type="EMBL" id="AP005456">
    <property type="protein sequence ID" value="BAD54487.1"/>
    <property type="molecule type" value="Genomic_DNA"/>
</dbReference>
<dbReference type="EMBL" id="AP008212">
    <property type="protein sequence ID" value="BAF19803.1"/>
    <property type="molecule type" value="Genomic_DNA"/>
</dbReference>
<dbReference type="EMBL" id="AP014962">
    <property type="protein sequence ID" value="BAS98278.1"/>
    <property type="molecule type" value="Genomic_DNA"/>
</dbReference>
<dbReference type="EMBL" id="CM000143">
    <property type="protein sequence ID" value="EAZ37390.1"/>
    <property type="molecule type" value="Genomic_DNA"/>
</dbReference>
<dbReference type="SMR" id="Q5Z6A4"/>
<dbReference type="FunCoup" id="Q5Z6A4">
    <property type="interactions" value="17"/>
</dbReference>
<dbReference type="STRING" id="39947.Q5Z6A4"/>
<dbReference type="PaxDb" id="39947-Q5Z6A4"/>
<dbReference type="EnsemblPlants" id="Os06t0565200-00">
    <property type="protein sequence ID" value="Os06t0565200-00"/>
    <property type="gene ID" value="Os06g0565200"/>
</dbReference>
<dbReference type="Gramene" id="Os06t0565200-00">
    <property type="protein sequence ID" value="Os06t0565200-00"/>
    <property type="gene ID" value="Os06g0565200"/>
</dbReference>
<dbReference type="KEGG" id="dosa:Os06g0565200"/>
<dbReference type="eggNOG" id="KOG0627">
    <property type="taxonomic scope" value="Eukaryota"/>
</dbReference>
<dbReference type="HOGENOM" id="CLU_030308_1_3_1"/>
<dbReference type="InParanoid" id="Q5Z6A4"/>
<dbReference type="OMA" id="ATDMIWY"/>
<dbReference type="Proteomes" id="UP000000763">
    <property type="component" value="Chromosome 6"/>
</dbReference>
<dbReference type="Proteomes" id="UP000007752">
    <property type="component" value="Chromosome 6"/>
</dbReference>
<dbReference type="Proteomes" id="UP000059680">
    <property type="component" value="Chromosome 6"/>
</dbReference>
<dbReference type="GO" id="GO:0005737">
    <property type="term" value="C:cytoplasm"/>
    <property type="evidence" value="ECO:0007669"/>
    <property type="project" value="UniProtKB-SubCell"/>
</dbReference>
<dbReference type="GO" id="GO:0005634">
    <property type="term" value="C:nucleus"/>
    <property type="evidence" value="ECO:0000318"/>
    <property type="project" value="GO_Central"/>
</dbReference>
<dbReference type="GO" id="GO:0003700">
    <property type="term" value="F:DNA-binding transcription factor activity"/>
    <property type="evidence" value="ECO:0000318"/>
    <property type="project" value="GO_Central"/>
</dbReference>
<dbReference type="GO" id="GO:0043565">
    <property type="term" value="F:sequence-specific DNA binding"/>
    <property type="evidence" value="ECO:0007669"/>
    <property type="project" value="InterPro"/>
</dbReference>
<dbReference type="GO" id="GO:0034605">
    <property type="term" value="P:cellular response to heat"/>
    <property type="evidence" value="ECO:0000318"/>
    <property type="project" value="GO_Central"/>
</dbReference>
<dbReference type="GO" id="GO:0006357">
    <property type="term" value="P:regulation of transcription by RNA polymerase II"/>
    <property type="evidence" value="ECO:0000318"/>
    <property type="project" value="GO_Central"/>
</dbReference>
<dbReference type="FunFam" id="1.10.10.10:FF:000367">
    <property type="entry name" value="Heat stress transcription factor A-8"/>
    <property type="match status" value="1"/>
</dbReference>
<dbReference type="Gene3D" id="1.10.10.10">
    <property type="entry name" value="Winged helix-like DNA-binding domain superfamily/Winged helix DNA-binding domain"/>
    <property type="match status" value="1"/>
</dbReference>
<dbReference type="InterPro" id="IPR000232">
    <property type="entry name" value="HSF_DNA-bd"/>
</dbReference>
<dbReference type="InterPro" id="IPR036388">
    <property type="entry name" value="WH-like_DNA-bd_sf"/>
</dbReference>
<dbReference type="InterPro" id="IPR036390">
    <property type="entry name" value="WH_DNA-bd_sf"/>
</dbReference>
<dbReference type="PANTHER" id="PTHR10015">
    <property type="entry name" value="HEAT SHOCK TRANSCRIPTION FACTOR"/>
    <property type="match status" value="1"/>
</dbReference>
<dbReference type="PANTHER" id="PTHR10015:SF338">
    <property type="entry name" value="HEAT STRESS TRANSCRIPTION FACTOR A-2"/>
    <property type="match status" value="1"/>
</dbReference>
<dbReference type="Pfam" id="PF00447">
    <property type="entry name" value="HSF_DNA-bind"/>
    <property type="match status" value="1"/>
</dbReference>
<dbReference type="PRINTS" id="PR00056">
    <property type="entry name" value="HSFDOMAIN"/>
</dbReference>
<dbReference type="SMART" id="SM00415">
    <property type="entry name" value="HSF"/>
    <property type="match status" value="1"/>
</dbReference>
<dbReference type="SUPFAM" id="SSF46785">
    <property type="entry name" value="Winged helix' DNA-binding domain"/>
    <property type="match status" value="1"/>
</dbReference>
<dbReference type="PROSITE" id="PS00434">
    <property type="entry name" value="HSF_DOMAIN"/>
    <property type="match status" value="1"/>
</dbReference>
<keyword id="KW-0175">Coiled coil</keyword>
<keyword id="KW-0963">Cytoplasm</keyword>
<keyword id="KW-0238">DNA-binding</keyword>
<keyword id="KW-0539">Nucleus</keyword>
<keyword id="KW-0597">Phosphoprotein</keyword>
<keyword id="KW-1185">Reference proteome</keyword>
<keyword id="KW-0346">Stress response</keyword>
<keyword id="KW-0804">Transcription</keyword>
<keyword id="KW-0805">Transcription regulation</keyword>